<comment type="function">
    <text evidence="1">Transcriptional factor involved in regulation of membrane lipid biosynthesis by repressing genes involved in fatty acid and phospholipid metabolism.</text>
</comment>
<comment type="similarity">
    <text evidence="1">Belongs to the FapR family.</text>
</comment>
<evidence type="ECO:0000255" key="1">
    <source>
        <dbReference type="HAMAP-Rule" id="MF_01814"/>
    </source>
</evidence>
<dbReference type="EMBL" id="CP001176">
    <property type="protein sequence ID" value="ACK60341.1"/>
    <property type="molecule type" value="Genomic_DNA"/>
</dbReference>
<dbReference type="RefSeq" id="WP_000747348.1">
    <property type="nucleotide sequence ID" value="NZ_VEHB01000002.1"/>
</dbReference>
<dbReference type="SMR" id="B7HDX7"/>
<dbReference type="KEGG" id="bcb:BCB4264_A3953"/>
<dbReference type="HOGENOM" id="CLU_095708_0_0_9"/>
<dbReference type="Proteomes" id="UP000007096">
    <property type="component" value="Chromosome"/>
</dbReference>
<dbReference type="GO" id="GO:0003677">
    <property type="term" value="F:DNA binding"/>
    <property type="evidence" value="ECO:0007669"/>
    <property type="project" value="UniProtKB-KW"/>
</dbReference>
<dbReference type="GO" id="GO:0003700">
    <property type="term" value="F:DNA-binding transcription factor activity"/>
    <property type="evidence" value="ECO:0007669"/>
    <property type="project" value="UniProtKB-UniRule"/>
</dbReference>
<dbReference type="GO" id="GO:0006633">
    <property type="term" value="P:fatty acid biosynthetic process"/>
    <property type="evidence" value="ECO:0007669"/>
    <property type="project" value="UniProtKB-KW"/>
</dbReference>
<dbReference type="GO" id="GO:0045892">
    <property type="term" value="P:negative regulation of DNA-templated transcription"/>
    <property type="evidence" value="ECO:0007669"/>
    <property type="project" value="UniProtKB-UniRule"/>
</dbReference>
<dbReference type="GO" id="GO:0045717">
    <property type="term" value="P:negative regulation of fatty acid biosynthetic process"/>
    <property type="evidence" value="ECO:0007669"/>
    <property type="project" value="UniProtKB-UniRule"/>
</dbReference>
<dbReference type="CDD" id="cd03440">
    <property type="entry name" value="hot_dog"/>
    <property type="match status" value="1"/>
</dbReference>
<dbReference type="Gene3D" id="3.10.129.10">
    <property type="entry name" value="Hotdog Thioesterase"/>
    <property type="match status" value="1"/>
</dbReference>
<dbReference type="Gene3D" id="1.10.10.10">
    <property type="entry name" value="Winged helix-like DNA-binding domain superfamily/Winged helix DNA-binding domain"/>
    <property type="match status" value="1"/>
</dbReference>
<dbReference type="HAMAP" id="MF_01814">
    <property type="entry name" value="Transcrip_fact_FapR"/>
    <property type="match status" value="1"/>
</dbReference>
<dbReference type="InterPro" id="IPR029069">
    <property type="entry name" value="HotDog_dom_sf"/>
</dbReference>
<dbReference type="InterPro" id="IPR006683">
    <property type="entry name" value="Thioestr_dom"/>
</dbReference>
<dbReference type="InterPro" id="IPR017275">
    <property type="entry name" value="Transcription_factor_FapR"/>
</dbReference>
<dbReference type="InterPro" id="IPR036388">
    <property type="entry name" value="WH-like_DNA-bd_sf"/>
</dbReference>
<dbReference type="InterPro" id="IPR036390">
    <property type="entry name" value="WH_DNA-bd_sf"/>
</dbReference>
<dbReference type="NCBIfam" id="NF003359">
    <property type="entry name" value="PRK04424.1"/>
    <property type="match status" value="1"/>
</dbReference>
<dbReference type="Pfam" id="PF03061">
    <property type="entry name" value="4HBT"/>
    <property type="match status" value="1"/>
</dbReference>
<dbReference type="PIRSF" id="PIRSF037733">
    <property type="entry name" value="Transcription_factor_FapR"/>
    <property type="match status" value="1"/>
</dbReference>
<dbReference type="SUPFAM" id="SSF54637">
    <property type="entry name" value="Thioesterase/thiol ester dehydrase-isomerase"/>
    <property type="match status" value="1"/>
</dbReference>
<dbReference type="SUPFAM" id="SSF46785">
    <property type="entry name" value="Winged helix' DNA-binding domain"/>
    <property type="match status" value="1"/>
</dbReference>
<proteinExistence type="inferred from homology"/>
<organism>
    <name type="scientific">Bacillus cereus (strain B4264)</name>
    <dbReference type="NCBI Taxonomy" id="405532"/>
    <lineage>
        <taxon>Bacteria</taxon>
        <taxon>Bacillati</taxon>
        <taxon>Bacillota</taxon>
        <taxon>Bacilli</taxon>
        <taxon>Bacillales</taxon>
        <taxon>Bacillaceae</taxon>
        <taxon>Bacillus</taxon>
        <taxon>Bacillus cereus group</taxon>
    </lineage>
</organism>
<reference key="1">
    <citation type="submission" date="2008-10" db="EMBL/GenBank/DDBJ databases">
        <title>Genome sequence of Bacillus cereus B4264.</title>
        <authorList>
            <person name="Dodson R.J."/>
            <person name="Durkin A.S."/>
            <person name="Rosovitz M.J."/>
            <person name="Rasko D.A."/>
            <person name="Hoffmaster A."/>
            <person name="Ravel J."/>
            <person name="Sutton G."/>
        </authorList>
    </citation>
    <scope>NUCLEOTIDE SEQUENCE [LARGE SCALE GENOMIC DNA]</scope>
    <source>
        <strain>B4264</strain>
    </source>
</reference>
<protein>
    <recommendedName>
        <fullName evidence="1">Transcription factor FapR</fullName>
    </recommendedName>
    <alternativeName>
        <fullName evidence="1">Fatty acid and phospholipid biosynthesis regulator</fullName>
    </alternativeName>
</protein>
<sequence length="197" mass="22782">MKKRRSKKERQELLQQTIESNPFITDEDLAEKFQVSIQTVRLDRMELSIPELRERIKHVATKQHEEDVKSLPLEEVVGEIIDIELDRHAISIFEVKIEHVFKRNQIARGHHLFAQANSLAVAVIDEELALTAKSTIRYIRPVKLGERVVAKARVEDVENDKGRTVVKVRSFVGEELVFTGTFEMYRSSNYSEEGNNL</sequence>
<feature type="chain" id="PRO_1000187831" description="Transcription factor FapR">
    <location>
        <begin position="1"/>
        <end position="197"/>
    </location>
</feature>
<accession>B7HDX7</accession>
<gene>
    <name evidence="1" type="primary">fapR</name>
    <name type="ordered locus">BCB4264_A3953</name>
</gene>
<keyword id="KW-0238">DNA-binding</keyword>
<keyword id="KW-0275">Fatty acid biosynthesis</keyword>
<keyword id="KW-0276">Fatty acid metabolism</keyword>
<keyword id="KW-0444">Lipid biosynthesis</keyword>
<keyword id="KW-0443">Lipid metabolism</keyword>
<keyword id="KW-0678">Repressor</keyword>
<keyword id="KW-0804">Transcription</keyword>
<keyword id="KW-0805">Transcription regulation</keyword>
<name>FAPR_BACC4</name>